<organism>
    <name type="scientific">Bdellovibrio phage phiMH2K</name>
    <name type="common">Bacteriophage phiMH2K</name>
    <dbReference type="NCBI Taxonomy" id="145579"/>
    <lineage>
        <taxon>Viruses</taxon>
        <taxon>Monodnaviria</taxon>
        <taxon>Sangervirae</taxon>
        <taxon>Phixviricota</taxon>
        <taxon>Malgrandaviricetes</taxon>
        <taxon>Petitvirales</taxon>
        <taxon>Microviridae</taxon>
        <taxon>Gokushovirinae</taxon>
        <taxon>Bdellomicrovirus</taxon>
        <taxon>Bdellomicrovirus MH2K</taxon>
    </lineage>
</organism>
<protein>
    <recommendedName>
        <fullName>DNA binding protein VP8</fullName>
    </recommendedName>
</protein>
<organismHost>
    <name type="scientific">Bdellovibrio bacteriovorus</name>
    <dbReference type="NCBI Taxonomy" id="959"/>
</organismHost>
<feature type="chain" id="PRO_0000372060" description="DNA binding protein VP8">
    <location>
        <begin position="1"/>
        <end position="38"/>
    </location>
</feature>
<feature type="region of interest" description="Disordered" evidence="2">
    <location>
        <begin position="1"/>
        <end position="38"/>
    </location>
</feature>
<feature type="compositionally biased region" description="Basic residues" evidence="2">
    <location>
        <begin position="1"/>
        <end position="16"/>
    </location>
</feature>
<reference key="1">
    <citation type="journal article" date="2002" name="J. Bacteriol.">
        <title>Microviridae, a family divided: isolation, characterization, and genome sequence of phiMH2K, a bacteriophage of the obligate intracellular parasitic bacterium Bdellovibrio bacteriovorus.</title>
        <authorList>
            <person name="Brentlinger K.L."/>
            <person name="Hafenstein S."/>
            <person name="Novak C.R."/>
            <person name="Fane B.A."/>
            <person name="Borgon R."/>
            <person name="McKenna R."/>
            <person name="Agbandje-McKenna M."/>
        </authorList>
    </citation>
    <scope>NUCLEOTIDE SEQUENCE [GENOMIC DNA]</scope>
</reference>
<sequence length="38" mass="4454">MKRKPMSRKASQKTFKKNTGVQRMNHLNPRAMRGGIRL</sequence>
<comment type="function">
    <text evidence="1">Mediates ssDNA packaging into virion, it locates to the internal surface of the capsid, thereby displacing the internal scaffolding protein VP3 during virion formation. Additionally, protein VP8 plays a role in viral attachment to the host cell (By similarity).</text>
</comment>
<comment type="subcellular location">
    <subcellularLocation>
        <location>Virion</location>
    </subcellularLocation>
    <subcellularLocation>
        <location evidence="1">Host cytoplasm</location>
    </subcellularLocation>
</comment>
<comment type="similarity">
    <text evidence="3">Belongs to the microviridae J protein family.</text>
</comment>
<dbReference type="EMBL" id="AF306496">
    <property type="protein sequence ID" value="AAG45348.1"/>
    <property type="molecule type" value="Genomic_DNA"/>
</dbReference>
<dbReference type="RefSeq" id="NP_073546.1">
    <property type="nucleotide sequence ID" value="NC_002643.1"/>
</dbReference>
<dbReference type="KEGG" id="vg:918748"/>
<dbReference type="Proteomes" id="UP000002418">
    <property type="component" value="Genome"/>
</dbReference>
<dbReference type="GO" id="GO:0030430">
    <property type="term" value="C:host cell cytoplasm"/>
    <property type="evidence" value="ECO:0007669"/>
    <property type="project" value="UniProtKB-SubCell"/>
</dbReference>
<dbReference type="GO" id="GO:0019028">
    <property type="term" value="C:viral capsid"/>
    <property type="evidence" value="ECO:0007669"/>
    <property type="project" value="UniProtKB-KW"/>
</dbReference>
<dbReference type="GO" id="GO:0003677">
    <property type="term" value="F:DNA binding"/>
    <property type="evidence" value="ECO:0007669"/>
    <property type="project" value="UniProtKB-KW"/>
</dbReference>
<evidence type="ECO:0000250" key="1"/>
<evidence type="ECO:0000256" key="2">
    <source>
        <dbReference type="SAM" id="MobiDB-lite"/>
    </source>
</evidence>
<evidence type="ECO:0000305" key="3"/>
<proteinExistence type="inferred from homology"/>
<gene>
    <name type="ORF">ORF8</name>
</gene>
<keyword id="KW-0167">Capsid protein</keyword>
<keyword id="KW-0238">DNA-binding</keyword>
<keyword id="KW-1035">Host cytoplasm</keyword>
<keyword id="KW-1185">Reference proteome</keyword>
<keyword id="KW-0946">Virion</keyword>
<name>J_BPPHM</name>
<accession>Q9G051</accession>